<proteinExistence type="inferred from homology"/>
<protein>
    <recommendedName>
        <fullName>Late expression factor 5</fullName>
    </recommendedName>
</protein>
<gene>
    <name type="primary">LEF-5</name>
    <name type="ORF">ORF100</name>
</gene>
<comment type="function">
    <text evidence="1">Required for late and very late gene expression.</text>
</comment>
<comment type="similarity">
    <text evidence="2">Belongs to the baculoviridae LEF-5 family.</text>
</comment>
<evidence type="ECO:0000250" key="1"/>
<evidence type="ECO:0000305" key="2"/>
<dbReference type="EMBL" id="U75930">
    <property type="protein sequence ID" value="AAC59099.1"/>
    <property type="molecule type" value="Genomic_DNA"/>
</dbReference>
<dbReference type="RefSeq" id="NP_046256.1">
    <property type="nucleotide sequence ID" value="NC_001875.2"/>
</dbReference>
<dbReference type="KEGG" id="vg:912083"/>
<dbReference type="OrthoDB" id="12882at10239"/>
<dbReference type="Proteomes" id="UP000009248">
    <property type="component" value="Genome"/>
</dbReference>
<dbReference type="GO" id="GO:0006355">
    <property type="term" value="P:regulation of DNA-templated transcription"/>
    <property type="evidence" value="ECO:0007669"/>
    <property type="project" value="InterPro"/>
</dbReference>
<dbReference type="InterPro" id="IPR021758">
    <property type="entry name" value="Baculo_LEF5_C"/>
</dbReference>
<dbReference type="InterPro" id="IPR006923">
    <property type="entry name" value="Baculo_LEF5_N"/>
</dbReference>
<dbReference type="Pfam" id="PF04838">
    <property type="entry name" value="Baculo_LEF5"/>
    <property type="match status" value="1"/>
</dbReference>
<dbReference type="Pfam" id="PF11792">
    <property type="entry name" value="Baculo_LEF5_C"/>
    <property type="match status" value="1"/>
</dbReference>
<organismHost>
    <name type="scientific">Orgyia pseudotsugata</name>
    <name type="common">Douglas-fir tussock moth</name>
    <dbReference type="NCBI Taxonomy" id="33414"/>
</organismHost>
<name>LEF5_NPVOP</name>
<reference key="1">
    <citation type="journal article" date="1997" name="Virology">
        <title>The sequence of the Orgyia pseudotsugata multinucleocapsid nuclear polyhedrosis virus genome.</title>
        <authorList>
            <person name="Ahrens C.H."/>
            <person name="Russell R.R."/>
            <person name="Funk C.J."/>
            <person name="Evans J."/>
            <person name="Harwood S."/>
            <person name="Rohrmann G.F."/>
        </authorList>
    </citation>
    <scope>NUCLEOTIDE SEQUENCE [LARGE SCALE GENOMIC DNA]</scope>
</reference>
<organism>
    <name type="scientific">Orgyia pseudotsugata multicapsid polyhedrosis virus</name>
    <name type="common">OpMNPV</name>
    <dbReference type="NCBI Taxonomy" id="262177"/>
    <lineage>
        <taxon>Viruses</taxon>
        <taxon>Viruses incertae sedis</taxon>
        <taxon>Naldaviricetes</taxon>
        <taxon>Lefavirales</taxon>
        <taxon>Baculoviridae</taxon>
        <taxon>Alphabaculovirus</taxon>
        <taxon>Alphabaculovirus orpseudotsugatae</taxon>
    </lineage>
</organism>
<accession>O10344</accession>
<feature type="chain" id="PRO_0000132827" description="Late expression factor 5">
    <location>
        <begin position="1"/>
        <end position="263"/>
    </location>
</feature>
<keyword id="KW-1185">Reference proteome</keyword>
<keyword id="KW-0804">Transcription</keyword>
<keyword id="KW-0805">Transcription regulation</keyword>
<sequence length="263" mass="30323">MALVKGVAQSQTRPLAFHGEQWTPRALFTVFGAFRASKDYAKLIEFLTNNFACYVKNKTFNFAGTGHLFHSLYAFVPNVSELVKERKQIRLQIDCVMRLFKNTTNDFKMYVELFAFIDAHGGAECPCLLLQQSKLNAVSFVENLNCKLFDIKPPKFKKEPFDSILSKYSLNYKALCFKKKEKCTVGCVTKRQKKMKRRQLLSDRVIYLHNKNDVLDERTLLHGPSGTSLAPCLHRYATVERQTRAGDEMVSFIRYCELCQMRA</sequence>